<accession>C4ZWC3</accession>
<organism>
    <name type="scientific">Escherichia coli (strain K12 / MC4100 / BW2952)</name>
    <dbReference type="NCBI Taxonomy" id="595496"/>
    <lineage>
        <taxon>Bacteria</taxon>
        <taxon>Pseudomonadati</taxon>
        <taxon>Pseudomonadota</taxon>
        <taxon>Gammaproteobacteria</taxon>
        <taxon>Enterobacterales</taxon>
        <taxon>Enterobacteriaceae</taxon>
        <taxon>Escherichia</taxon>
    </lineage>
</organism>
<name>RLMH_ECOBW</name>
<gene>
    <name evidence="1" type="primary">rlmH</name>
    <name type="ordered locus">BWG_0507</name>
</gene>
<reference key="1">
    <citation type="journal article" date="2009" name="J. Bacteriol.">
        <title>Genomic sequencing reveals regulatory mutations and recombinational events in the widely used MC4100 lineage of Escherichia coli K-12.</title>
        <authorList>
            <person name="Ferenci T."/>
            <person name="Zhou Z."/>
            <person name="Betteridge T."/>
            <person name="Ren Y."/>
            <person name="Liu Y."/>
            <person name="Feng L."/>
            <person name="Reeves P.R."/>
            <person name="Wang L."/>
        </authorList>
    </citation>
    <scope>NUCLEOTIDE SEQUENCE [LARGE SCALE GENOMIC DNA]</scope>
    <source>
        <strain>K12 / MC4100 / BW2952</strain>
    </source>
</reference>
<evidence type="ECO:0000255" key="1">
    <source>
        <dbReference type="HAMAP-Rule" id="MF_00658"/>
    </source>
</evidence>
<keyword id="KW-0963">Cytoplasm</keyword>
<keyword id="KW-0489">Methyltransferase</keyword>
<keyword id="KW-0698">rRNA processing</keyword>
<keyword id="KW-0949">S-adenosyl-L-methionine</keyword>
<keyword id="KW-0808">Transferase</keyword>
<comment type="function">
    <text evidence="1">Specifically methylates the pseudouridine at position 1915 (m3Psi1915) in 23S rRNA.</text>
</comment>
<comment type="catalytic activity">
    <reaction evidence="1">
        <text>pseudouridine(1915) in 23S rRNA + S-adenosyl-L-methionine = N(3)-methylpseudouridine(1915) in 23S rRNA + S-adenosyl-L-homocysteine + H(+)</text>
        <dbReference type="Rhea" id="RHEA:42752"/>
        <dbReference type="Rhea" id="RHEA-COMP:10221"/>
        <dbReference type="Rhea" id="RHEA-COMP:10222"/>
        <dbReference type="ChEBI" id="CHEBI:15378"/>
        <dbReference type="ChEBI" id="CHEBI:57856"/>
        <dbReference type="ChEBI" id="CHEBI:59789"/>
        <dbReference type="ChEBI" id="CHEBI:65314"/>
        <dbReference type="ChEBI" id="CHEBI:74486"/>
        <dbReference type="EC" id="2.1.1.177"/>
    </reaction>
</comment>
<comment type="subunit">
    <text evidence="1">Homodimer.</text>
</comment>
<comment type="subcellular location">
    <subcellularLocation>
        <location evidence="1">Cytoplasm</location>
    </subcellularLocation>
</comment>
<comment type="similarity">
    <text evidence="1">Belongs to the RNA methyltransferase RlmH family.</text>
</comment>
<protein>
    <recommendedName>
        <fullName evidence="1">Ribosomal RNA large subunit methyltransferase H</fullName>
        <ecNumber evidence="1">2.1.1.177</ecNumber>
    </recommendedName>
    <alternativeName>
        <fullName evidence="1">23S rRNA (pseudouridine1915-N3)-methyltransferase</fullName>
    </alternativeName>
    <alternativeName>
        <fullName evidence="1">23S rRNA m3Psi1915 methyltransferase</fullName>
    </alternativeName>
    <alternativeName>
        <fullName evidence="1">rRNA (pseudouridine-N3-)-methyltransferase RlmH</fullName>
    </alternativeName>
</protein>
<proteinExistence type="inferred from homology"/>
<dbReference type="EC" id="2.1.1.177" evidence="1"/>
<dbReference type="EMBL" id="CP001396">
    <property type="protein sequence ID" value="ACR62279.1"/>
    <property type="molecule type" value="Genomic_DNA"/>
</dbReference>
<dbReference type="RefSeq" id="WP_000776104.1">
    <property type="nucleotide sequence ID" value="NC_012759.1"/>
</dbReference>
<dbReference type="SMR" id="C4ZWC3"/>
<dbReference type="GeneID" id="93776846"/>
<dbReference type="KEGG" id="ebw:BWG_0507"/>
<dbReference type="HOGENOM" id="CLU_100552_1_0_6"/>
<dbReference type="GO" id="GO:0005737">
    <property type="term" value="C:cytoplasm"/>
    <property type="evidence" value="ECO:0007669"/>
    <property type="project" value="UniProtKB-SubCell"/>
</dbReference>
<dbReference type="GO" id="GO:0070038">
    <property type="term" value="F:rRNA (pseudouridine-N3-)-methyltransferase activity"/>
    <property type="evidence" value="ECO:0007669"/>
    <property type="project" value="UniProtKB-UniRule"/>
</dbReference>
<dbReference type="CDD" id="cd18081">
    <property type="entry name" value="RlmH-like"/>
    <property type="match status" value="1"/>
</dbReference>
<dbReference type="FunFam" id="3.40.1280.10:FF:000004">
    <property type="entry name" value="Ribosomal RNA large subunit methyltransferase H"/>
    <property type="match status" value="1"/>
</dbReference>
<dbReference type="Gene3D" id="3.40.1280.10">
    <property type="match status" value="1"/>
</dbReference>
<dbReference type="HAMAP" id="MF_00658">
    <property type="entry name" value="23SrRNA_methyltr_H"/>
    <property type="match status" value="1"/>
</dbReference>
<dbReference type="InterPro" id="IPR029028">
    <property type="entry name" value="Alpha/beta_knot_MTases"/>
</dbReference>
<dbReference type="InterPro" id="IPR003742">
    <property type="entry name" value="RlmH-like"/>
</dbReference>
<dbReference type="InterPro" id="IPR029026">
    <property type="entry name" value="tRNA_m1G_MTases_N"/>
</dbReference>
<dbReference type="NCBIfam" id="NF000984">
    <property type="entry name" value="PRK00103.1-1"/>
    <property type="match status" value="1"/>
</dbReference>
<dbReference type="NCBIfam" id="NF000986">
    <property type="entry name" value="PRK00103.1-4"/>
    <property type="match status" value="1"/>
</dbReference>
<dbReference type="NCBIfam" id="TIGR00246">
    <property type="entry name" value="tRNA_RlmH_YbeA"/>
    <property type="match status" value="1"/>
</dbReference>
<dbReference type="PANTHER" id="PTHR33603">
    <property type="entry name" value="METHYLTRANSFERASE"/>
    <property type="match status" value="1"/>
</dbReference>
<dbReference type="PANTHER" id="PTHR33603:SF1">
    <property type="entry name" value="RIBOSOMAL RNA LARGE SUBUNIT METHYLTRANSFERASE H"/>
    <property type="match status" value="1"/>
</dbReference>
<dbReference type="Pfam" id="PF02590">
    <property type="entry name" value="SPOUT_MTase"/>
    <property type="match status" value="1"/>
</dbReference>
<dbReference type="PIRSF" id="PIRSF004505">
    <property type="entry name" value="MT_bac"/>
    <property type="match status" value="1"/>
</dbReference>
<dbReference type="SUPFAM" id="SSF75217">
    <property type="entry name" value="alpha/beta knot"/>
    <property type="match status" value="1"/>
</dbReference>
<feature type="chain" id="PRO_1000212450" description="Ribosomal RNA large subunit methyltransferase H">
    <location>
        <begin position="1"/>
        <end position="155"/>
    </location>
</feature>
<feature type="binding site" evidence="1">
    <location>
        <position position="72"/>
    </location>
    <ligand>
        <name>S-adenosyl-L-methionine</name>
        <dbReference type="ChEBI" id="CHEBI:59789"/>
    </ligand>
</feature>
<feature type="binding site" evidence="1">
    <location>
        <position position="103"/>
    </location>
    <ligand>
        <name>S-adenosyl-L-methionine</name>
        <dbReference type="ChEBI" id="CHEBI:59789"/>
    </ligand>
</feature>
<feature type="binding site" evidence="1">
    <location>
        <begin position="122"/>
        <end position="127"/>
    </location>
    <ligand>
        <name>S-adenosyl-L-methionine</name>
        <dbReference type="ChEBI" id="CHEBI:59789"/>
    </ligand>
</feature>
<sequence>MKLQLVAVGTKMPDWVQTGFTEYLRRFPKDMPFELIEIPAGKRGKNADIKRILDKEGEQMLAAAGKNRIVTLDIPGKPWDTPQLAAELERWKLDGRDVSLLIGGPEGLSPACKAAAEQSWSLSALTLPHPLVRVLVAESLYRAWSITTNHPYHRE</sequence>